<comment type="function">
    <text evidence="1">Modulates cell morphogenesis by regulating cell wall formation and assembly, and/or growth polarization.</text>
</comment>
<comment type="subcellular location">
    <subcellularLocation>
        <location evidence="2">Secreted</location>
        <location evidence="2">Cell wall</location>
    </subcellularLocation>
</comment>
<comment type="tissue specificity">
    <text evidence="5">Expressed in roots, stems, leaves and flowers, mostly in vascular tissues.</text>
</comment>
<comment type="PTM">
    <text evidence="1">Hydroxylated on proline residues in the S-P-P-P-P repeat.</text>
</comment>
<comment type="PTM">
    <text evidence="1">O-glycosylated on hydroxyprolines.</text>
</comment>
<evidence type="ECO:0000250" key="1"/>
<evidence type="ECO:0000250" key="2">
    <source>
        <dbReference type="UniProtKB" id="O48809"/>
    </source>
</evidence>
<evidence type="ECO:0000255" key="3"/>
<evidence type="ECO:0000256" key="4">
    <source>
        <dbReference type="SAM" id="MobiDB-lite"/>
    </source>
</evidence>
<evidence type="ECO:0000269" key="5">
    <source>
    </source>
</evidence>
<accession>Q9LHF1</accession>
<organism>
    <name type="scientific">Arabidopsis thaliana</name>
    <name type="common">Mouse-ear cress</name>
    <dbReference type="NCBI Taxonomy" id="3702"/>
    <lineage>
        <taxon>Eukaryota</taxon>
        <taxon>Viridiplantae</taxon>
        <taxon>Streptophyta</taxon>
        <taxon>Embryophyta</taxon>
        <taxon>Tracheophyta</taxon>
        <taxon>Spermatophyta</taxon>
        <taxon>Magnoliopsida</taxon>
        <taxon>eudicotyledons</taxon>
        <taxon>Gunneridae</taxon>
        <taxon>Pentapetalae</taxon>
        <taxon>rosids</taxon>
        <taxon>malvids</taxon>
        <taxon>Brassicales</taxon>
        <taxon>Brassicaceae</taxon>
        <taxon>Camelineae</taxon>
        <taxon>Arabidopsis</taxon>
    </lineage>
</organism>
<proteinExistence type="evidence at protein level"/>
<reference key="1">
    <citation type="journal article" date="2000" name="DNA Res.">
        <title>Structural analysis of Arabidopsis thaliana chromosome 3. II. Sequence features of the 4,251,695 bp regions covered by 90 P1, TAC and BAC clones.</title>
        <authorList>
            <person name="Kaneko T."/>
            <person name="Katoh T."/>
            <person name="Sato S."/>
            <person name="Nakamura Y."/>
            <person name="Asamizu E."/>
            <person name="Tabata S."/>
        </authorList>
    </citation>
    <scope>NUCLEOTIDE SEQUENCE [LARGE SCALE GENOMIC DNA]</scope>
    <source>
        <strain>cv. Columbia</strain>
    </source>
</reference>
<reference key="2">
    <citation type="journal article" date="2017" name="Plant J.">
        <title>Araport11: a complete reannotation of the Arabidopsis thaliana reference genome.</title>
        <authorList>
            <person name="Cheng C.Y."/>
            <person name="Krishnakumar V."/>
            <person name="Chan A.P."/>
            <person name="Thibaud-Nissen F."/>
            <person name="Schobel S."/>
            <person name="Town C.D."/>
        </authorList>
    </citation>
    <scope>GENOME REANNOTATION</scope>
    <source>
        <strain>cv. Columbia</strain>
    </source>
</reference>
<reference key="3">
    <citation type="journal article" date="2003" name="Plant Physiol.">
        <title>Whole-genome comparison of leucine-rich repeat extensins in Arabidopsis and rice. A conserved family of cell wall proteins form a vegetative and a reproductive clade.</title>
        <authorList>
            <person name="Baumberger N."/>
            <person name="Doesseger B."/>
            <person name="Guyot R."/>
            <person name="Diet A."/>
            <person name="Parsons R.L."/>
            <person name="Clark M.A."/>
            <person name="Simmons M.P."/>
            <person name="Bedinger P."/>
            <person name="Goff S.A."/>
            <person name="Ringli C."/>
            <person name="Keller B."/>
        </authorList>
    </citation>
    <scope>TISSUE SPECIFICITY</scope>
    <scope>GENE FAMILY</scope>
    <scope>NOMENCLATURE</scope>
</reference>
<reference key="4">
    <citation type="journal article" date="2007" name="Mol. Cell. Proteomics">
        <title>Multidimensional protein identification technology (MudPIT) analysis of ubiquitinated proteins in plants.</title>
        <authorList>
            <person name="Maor R."/>
            <person name="Jones A."/>
            <person name="Nuehse T.S."/>
            <person name="Studholme D.J."/>
            <person name="Peck S.C."/>
            <person name="Shirasu K."/>
        </authorList>
    </citation>
    <scope>IDENTIFICATION BY MASS SPECTROMETRY [LARGE SCALE ANALYSIS]</scope>
    <source>
        <strain>cv. Landsberg erecta</strain>
    </source>
</reference>
<feature type="signal peptide" evidence="3">
    <location>
        <begin position="1"/>
        <end position="25"/>
    </location>
</feature>
<feature type="chain" id="PRO_0000395464" description="Leucine-rich repeat extensin-like protein 4">
    <location>
        <begin position="26"/>
        <end position="494"/>
    </location>
</feature>
<feature type="repeat" description="LRR 1">
    <location>
        <begin position="121"/>
        <end position="145"/>
    </location>
</feature>
<feature type="repeat" description="LRR 2">
    <location>
        <begin position="146"/>
        <end position="168"/>
    </location>
</feature>
<feature type="repeat" description="LRR 3">
    <location>
        <begin position="169"/>
        <end position="193"/>
    </location>
</feature>
<feature type="repeat" description="LRR 4">
    <location>
        <begin position="194"/>
        <end position="217"/>
    </location>
</feature>
<feature type="repeat" description="LRR 5">
    <location>
        <begin position="219"/>
        <end position="240"/>
    </location>
</feature>
<feature type="repeat" description="LRR 6">
    <location>
        <begin position="242"/>
        <end position="263"/>
    </location>
</feature>
<feature type="repeat" description="LRR 7">
    <location>
        <begin position="264"/>
        <end position="287"/>
    </location>
</feature>
<feature type="repeat" description="LRR 8">
    <location>
        <begin position="289"/>
        <end position="311"/>
    </location>
</feature>
<feature type="repeat" description="LRR 9">
    <location>
        <begin position="312"/>
        <end position="335"/>
    </location>
</feature>
<feature type="region of interest" description="Contains the Ser-Pro(4) repeats">
    <location>
        <begin position="404"/>
        <end position="494"/>
    </location>
</feature>
<feature type="region of interest" description="Disordered" evidence="4">
    <location>
        <begin position="422"/>
        <end position="482"/>
    </location>
</feature>
<feature type="compositionally biased region" description="Pro residues" evidence="4">
    <location>
        <begin position="422"/>
        <end position="479"/>
    </location>
</feature>
<feature type="glycosylation site" description="N-linked (GlcNAc...) asparagine" evidence="3">
    <location>
        <position position="60"/>
    </location>
</feature>
<feature type="glycosylation site" description="N-linked (GlcNAc...) asparagine" evidence="3">
    <location>
        <position position="94"/>
    </location>
</feature>
<feature type="glycosylation site" description="N-linked (GlcNAc...) asparagine" evidence="3">
    <location>
        <position position="106"/>
    </location>
</feature>
<feature type="glycosylation site" description="N-linked (GlcNAc...) asparagine" evidence="3">
    <location>
        <position position="289"/>
    </location>
</feature>
<feature type="glycosylation site" description="N-linked (GlcNAc...) asparagine" evidence="3">
    <location>
        <position position="340"/>
    </location>
</feature>
<keyword id="KW-0134">Cell wall</keyword>
<keyword id="KW-0961">Cell wall biogenesis/degradation</keyword>
<keyword id="KW-0325">Glycoprotein</keyword>
<keyword id="KW-0379">Hydroxylation</keyword>
<keyword id="KW-0433">Leucine-rich repeat</keyword>
<keyword id="KW-1185">Reference proteome</keyword>
<keyword id="KW-0677">Repeat</keyword>
<keyword id="KW-0964">Secreted</keyword>
<keyword id="KW-0732">Signal</keyword>
<protein>
    <recommendedName>
        <fullName>Leucine-rich repeat extensin-like protein 4</fullName>
        <shortName>AtLRX4</shortName>
        <shortName>LRR/EXTENSIN4</shortName>
    </recommendedName>
    <alternativeName>
        <fullName>Cell wall hydroxyproline-rich glycoprotein</fullName>
    </alternativeName>
</protein>
<name>LRX4_ARATH</name>
<gene>
    <name type="primary">LRX4</name>
    <name type="ordered locus">At3g24480</name>
    <name type="ORF">MXP5.6</name>
</gene>
<sequence length="494" mass="54703">MKNNTTQSLLLLLLFFFFFFEISHSLSISSNAPLSDTEVRFIQRRQLLYYRDEFGDRGENVTVDPSLIFENPRLRSAYIALQAWKQAILSDPNNITVNWIGSNVCNYTGVFCSKALDNRKIRTVAGIDLNHADIAGYLPEELGLLTDLALFHVNSNRFCGTVPHKFKQLKLLFELDLSNNRFAGKFPTVVLHLPSLKFLDLRFNEFEGTVPKELFSKNLDAIFINHNRFRFELPENFGDSPVSVIVLANNHFHGCIPTSLVEMKNLNEIIFMNNGLNSCLPADIGRLKNVTVFDVSFNELVGPLPESVGGMVEVEQLNVAHNLLSGKIPASICQLPKLENFTYSYNFFTGEAPVCLRLSEFDDRRNCLPGRPAQRSSRQCSAFLSRPSVDCGSFGCGRSVVKPSPPIVALPPPPPPSPPLPPPVYSPPPSPPVFSPPPSPPVYSPPPPPSIHYSSPPPPPVHHSSPPPPSPEFEGPLPPVIGVSYASPPPPPFY</sequence>
<dbReference type="EMBL" id="AP002048">
    <property type="protein sequence ID" value="BAB01951.1"/>
    <property type="molecule type" value="Genomic_DNA"/>
</dbReference>
<dbReference type="EMBL" id="CP002686">
    <property type="protein sequence ID" value="AEE76902.1"/>
    <property type="molecule type" value="Genomic_DNA"/>
</dbReference>
<dbReference type="RefSeq" id="NP_189091.1">
    <property type="nucleotide sequence ID" value="NM_113355.2"/>
</dbReference>
<dbReference type="SMR" id="Q9LHF1"/>
<dbReference type="BioGRID" id="7369">
    <property type="interactions" value="1"/>
</dbReference>
<dbReference type="FunCoup" id="Q9LHF1">
    <property type="interactions" value="102"/>
</dbReference>
<dbReference type="STRING" id="3702.Q9LHF1"/>
<dbReference type="GlyCosmos" id="Q9LHF1">
    <property type="glycosylation" value="5 sites, No reported glycans"/>
</dbReference>
<dbReference type="GlyGen" id="Q9LHF1">
    <property type="glycosylation" value="5 sites"/>
</dbReference>
<dbReference type="PaxDb" id="3702-AT3G24480.1"/>
<dbReference type="ProteomicsDB" id="238503"/>
<dbReference type="EnsemblPlants" id="AT3G24480.1">
    <property type="protein sequence ID" value="AT3G24480.1"/>
    <property type="gene ID" value="AT3G24480"/>
</dbReference>
<dbReference type="GeneID" id="822038"/>
<dbReference type="Gramene" id="AT3G24480.1">
    <property type="protein sequence ID" value="AT3G24480.1"/>
    <property type="gene ID" value="AT3G24480"/>
</dbReference>
<dbReference type="KEGG" id="ath:AT3G24480"/>
<dbReference type="Araport" id="AT3G24480"/>
<dbReference type="TAIR" id="AT3G24480">
    <property type="gene designation" value="LRX4"/>
</dbReference>
<dbReference type="eggNOG" id="ENOG502QQ2D">
    <property type="taxonomic scope" value="Eukaryota"/>
</dbReference>
<dbReference type="HOGENOM" id="CLU_000288_23_5_1"/>
<dbReference type="InParanoid" id="Q9LHF1"/>
<dbReference type="OMA" id="VNWIGSN"/>
<dbReference type="PhylomeDB" id="Q9LHF1"/>
<dbReference type="PRO" id="PR:Q9LHF1"/>
<dbReference type="Proteomes" id="UP000006548">
    <property type="component" value="Chromosome 3"/>
</dbReference>
<dbReference type="ExpressionAtlas" id="Q9LHF1">
    <property type="expression patterns" value="baseline and differential"/>
</dbReference>
<dbReference type="GO" id="GO:0005576">
    <property type="term" value="C:extracellular region"/>
    <property type="evidence" value="ECO:0007669"/>
    <property type="project" value="UniProtKB-KW"/>
</dbReference>
<dbReference type="GO" id="GO:0009505">
    <property type="term" value="C:plant-type cell wall"/>
    <property type="evidence" value="ECO:0007005"/>
    <property type="project" value="TAIR"/>
</dbReference>
<dbReference type="GO" id="GO:0009506">
    <property type="term" value="C:plasmodesma"/>
    <property type="evidence" value="ECO:0007005"/>
    <property type="project" value="TAIR"/>
</dbReference>
<dbReference type="GO" id="GO:0005199">
    <property type="term" value="F:structural constituent of cell wall"/>
    <property type="evidence" value="ECO:0000250"/>
    <property type="project" value="TAIR"/>
</dbReference>
<dbReference type="GO" id="GO:0071555">
    <property type="term" value="P:cell wall organization"/>
    <property type="evidence" value="ECO:0007669"/>
    <property type="project" value="UniProtKB-KW"/>
</dbReference>
<dbReference type="FunFam" id="3.80.10.10:FF:000224">
    <property type="entry name" value="Leucine-rich repeat extensin-like protein 1"/>
    <property type="match status" value="1"/>
</dbReference>
<dbReference type="FunFam" id="3.80.10.10:FF:000631">
    <property type="entry name" value="Leucine-rich repeat extensin-like protein 5"/>
    <property type="match status" value="1"/>
</dbReference>
<dbReference type="Gene3D" id="3.80.10.10">
    <property type="entry name" value="Ribonuclease Inhibitor"/>
    <property type="match status" value="2"/>
</dbReference>
<dbReference type="InterPro" id="IPR001611">
    <property type="entry name" value="Leu-rich_rpt"/>
</dbReference>
<dbReference type="InterPro" id="IPR032675">
    <property type="entry name" value="LRR_dom_sf"/>
</dbReference>
<dbReference type="InterPro" id="IPR051582">
    <property type="entry name" value="LRR_extensin-like_regulator"/>
</dbReference>
<dbReference type="InterPro" id="IPR013210">
    <property type="entry name" value="LRR_N_plant-typ"/>
</dbReference>
<dbReference type="PANTHER" id="PTHR32093">
    <property type="entry name" value="LEUCINE-RICH REPEAT EXTENSIN-LIKE PROTEIN 3-RELATED"/>
    <property type="match status" value="1"/>
</dbReference>
<dbReference type="PANTHER" id="PTHR32093:SF120">
    <property type="entry name" value="LEUCINE-RICH REPEAT EXTENSIN-LIKE PROTEIN 3-RELATED"/>
    <property type="match status" value="1"/>
</dbReference>
<dbReference type="Pfam" id="PF00560">
    <property type="entry name" value="LRR_1"/>
    <property type="match status" value="1"/>
</dbReference>
<dbReference type="Pfam" id="PF13855">
    <property type="entry name" value="LRR_8"/>
    <property type="match status" value="1"/>
</dbReference>
<dbReference type="Pfam" id="PF08263">
    <property type="entry name" value="LRRNT_2"/>
    <property type="match status" value="1"/>
</dbReference>
<dbReference type="PRINTS" id="PR01217">
    <property type="entry name" value="PRICHEXTENSN"/>
</dbReference>
<dbReference type="SUPFAM" id="SSF52058">
    <property type="entry name" value="L domain-like"/>
    <property type="match status" value="1"/>
</dbReference>